<organism>
    <name type="scientific">Mus musculus</name>
    <name type="common">Mouse</name>
    <dbReference type="NCBI Taxonomy" id="10090"/>
    <lineage>
        <taxon>Eukaryota</taxon>
        <taxon>Metazoa</taxon>
        <taxon>Chordata</taxon>
        <taxon>Craniata</taxon>
        <taxon>Vertebrata</taxon>
        <taxon>Euteleostomi</taxon>
        <taxon>Mammalia</taxon>
        <taxon>Eutheria</taxon>
        <taxon>Euarchontoglires</taxon>
        <taxon>Glires</taxon>
        <taxon>Rodentia</taxon>
        <taxon>Myomorpha</taxon>
        <taxon>Muroidea</taxon>
        <taxon>Muridae</taxon>
        <taxon>Murinae</taxon>
        <taxon>Mus</taxon>
        <taxon>Mus</taxon>
    </lineage>
</organism>
<gene>
    <name evidence="13" type="primary">Fktn</name>
    <name evidence="1" type="synonym">Fcmd</name>
</gene>
<dbReference type="EC" id="2.7.8.-" evidence="1"/>
<dbReference type="EMBL" id="AJ511807">
    <property type="protein sequence ID" value="CAD54302.1"/>
    <property type="molecule type" value="mRNA"/>
</dbReference>
<dbReference type="EMBL" id="AB077383">
    <property type="protein sequence ID" value="BAB87769.1"/>
    <property type="molecule type" value="mRNA"/>
</dbReference>
<dbReference type="EMBL" id="AK085931">
    <property type="protein sequence ID" value="BAC39572.1"/>
    <property type="molecule type" value="mRNA"/>
</dbReference>
<dbReference type="EMBL" id="BC017538">
    <property type="protein sequence ID" value="AAH17538.1"/>
    <property type="molecule type" value="mRNA"/>
</dbReference>
<dbReference type="CCDS" id="CCDS18191.1"/>
<dbReference type="RefSeq" id="NP_647470.1">
    <property type="nucleotide sequence ID" value="NM_139309.5"/>
</dbReference>
<dbReference type="FunCoup" id="Q8R507">
    <property type="interactions" value="2827"/>
</dbReference>
<dbReference type="STRING" id="10090.ENSMUSP00000114699"/>
<dbReference type="GlyCosmos" id="Q8R507">
    <property type="glycosylation" value="1 site, No reported glycans"/>
</dbReference>
<dbReference type="GlyGen" id="Q8R507">
    <property type="glycosylation" value="1 site"/>
</dbReference>
<dbReference type="PhosphoSitePlus" id="Q8R507"/>
<dbReference type="PaxDb" id="10090-ENSMUSP00000114699"/>
<dbReference type="ProteomicsDB" id="266853"/>
<dbReference type="Antibodypedia" id="2319">
    <property type="antibodies" value="178 antibodies from 32 providers"/>
</dbReference>
<dbReference type="DNASU" id="246179"/>
<dbReference type="Ensembl" id="ENSMUST00000061771.9">
    <property type="protein sequence ID" value="ENSMUSP00000061489.9"/>
    <property type="gene ID" value="ENSMUSG00000028414.18"/>
</dbReference>
<dbReference type="Ensembl" id="ENSMUST00000128667.8">
    <property type="protein sequence ID" value="ENSMUSP00000114699.2"/>
    <property type="gene ID" value="ENSMUSG00000028414.18"/>
</dbReference>
<dbReference type="GeneID" id="246179"/>
<dbReference type="KEGG" id="mmu:246179"/>
<dbReference type="UCSC" id="uc008sxe.1">
    <property type="organism name" value="mouse"/>
</dbReference>
<dbReference type="AGR" id="MGI:2179507"/>
<dbReference type="CTD" id="2218"/>
<dbReference type="MGI" id="MGI:2179507">
    <property type="gene designation" value="Fktn"/>
</dbReference>
<dbReference type="VEuPathDB" id="HostDB:ENSMUSG00000028414"/>
<dbReference type="eggNOG" id="ENOG502QUDN">
    <property type="taxonomic scope" value="Eukaryota"/>
</dbReference>
<dbReference type="GeneTree" id="ENSGT00390000014471"/>
<dbReference type="HOGENOM" id="CLU_047572_0_0_1"/>
<dbReference type="InParanoid" id="Q8R507"/>
<dbReference type="OMA" id="ICKWATH"/>
<dbReference type="OrthoDB" id="444255at2759"/>
<dbReference type="PhylomeDB" id="Q8R507"/>
<dbReference type="TreeFam" id="TF319633"/>
<dbReference type="UniPathway" id="UPA00378"/>
<dbReference type="BioGRID-ORCS" id="246179">
    <property type="hits" value="1 hit in 77 CRISPR screens"/>
</dbReference>
<dbReference type="ChiTaRS" id="Fktn">
    <property type="organism name" value="mouse"/>
</dbReference>
<dbReference type="PRO" id="PR:Q8R507"/>
<dbReference type="Proteomes" id="UP000000589">
    <property type="component" value="Chromosome 4"/>
</dbReference>
<dbReference type="RNAct" id="Q8R507">
    <property type="molecule type" value="protein"/>
</dbReference>
<dbReference type="Bgee" id="ENSMUSG00000028414">
    <property type="expression patterns" value="Expressed in epithelium of lens and 237 other cell types or tissues"/>
</dbReference>
<dbReference type="ExpressionAtlas" id="Q8R507">
    <property type="expression patterns" value="baseline and differential"/>
</dbReference>
<dbReference type="GO" id="GO:0005801">
    <property type="term" value="C:cis-Golgi network"/>
    <property type="evidence" value="ECO:0000250"/>
    <property type="project" value="UniProtKB"/>
</dbReference>
<dbReference type="GO" id="GO:0005783">
    <property type="term" value="C:endoplasmic reticulum"/>
    <property type="evidence" value="ECO:0000250"/>
    <property type="project" value="BHF-UCL"/>
</dbReference>
<dbReference type="GO" id="GO:0005794">
    <property type="term" value="C:Golgi apparatus"/>
    <property type="evidence" value="ECO:0000314"/>
    <property type="project" value="MGI"/>
</dbReference>
<dbReference type="GO" id="GO:0000139">
    <property type="term" value="C:Golgi membrane"/>
    <property type="evidence" value="ECO:0000314"/>
    <property type="project" value="UniProtKB"/>
</dbReference>
<dbReference type="GO" id="GO:0005634">
    <property type="term" value="C:nucleus"/>
    <property type="evidence" value="ECO:0000250"/>
    <property type="project" value="BHF-UCL"/>
</dbReference>
<dbReference type="GO" id="GO:0016780">
    <property type="term" value="F:phosphotransferase activity, for other substituted phosphate groups"/>
    <property type="evidence" value="ECO:0000314"/>
    <property type="project" value="UniProtKB"/>
</dbReference>
<dbReference type="GO" id="GO:0071711">
    <property type="term" value="P:basement membrane organization"/>
    <property type="evidence" value="ECO:0000315"/>
    <property type="project" value="MGI"/>
</dbReference>
<dbReference type="GO" id="GO:0007420">
    <property type="term" value="P:brain development"/>
    <property type="evidence" value="ECO:0000314"/>
    <property type="project" value="MGI"/>
</dbReference>
<dbReference type="GO" id="GO:0021695">
    <property type="term" value="P:cerebellar cortex development"/>
    <property type="evidence" value="ECO:0000315"/>
    <property type="project" value="MGI"/>
</dbReference>
<dbReference type="GO" id="GO:0021987">
    <property type="term" value="P:cerebral cortex development"/>
    <property type="evidence" value="ECO:0000315"/>
    <property type="project" value="MGI"/>
</dbReference>
<dbReference type="GO" id="GO:0008285">
    <property type="term" value="P:negative regulation of cell population proliferation"/>
    <property type="evidence" value="ECO:0000250"/>
    <property type="project" value="BHF-UCL"/>
</dbReference>
<dbReference type="GO" id="GO:0046329">
    <property type="term" value="P:negative regulation of JNK cascade"/>
    <property type="evidence" value="ECO:0000250"/>
    <property type="project" value="BHF-UCL"/>
</dbReference>
<dbReference type="GO" id="GO:0001764">
    <property type="term" value="P:neuron migration"/>
    <property type="evidence" value="ECO:0000303"/>
    <property type="project" value="BHF-UCL"/>
</dbReference>
<dbReference type="GO" id="GO:0006486">
    <property type="term" value="P:protein glycosylation"/>
    <property type="evidence" value="ECO:0000314"/>
    <property type="project" value="MGI"/>
</dbReference>
<dbReference type="GO" id="GO:0006493">
    <property type="term" value="P:protein O-linked glycosylation"/>
    <property type="evidence" value="ECO:0000250"/>
    <property type="project" value="UniProtKB"/>
</dbReference>
<dbReference type="GO" id="GO:0035269">
    <property type="term" value="P:protein O-linked mannosylation"/>
    <property type="evidence" value="ECO:0000250"/>
    <property type="project" value="UniProtKB"/>
</dbReference>
<dbReference type="GO" id="GO:0060049">
    <property type="term" value="P:regulation of protein glycosylation"/>
    <property type="evidence" value="ECO:0000303"/>
    <property type="project" value="BHF-UCL"/>
</dbReference>
<dbReference type="GO" id="GO:0098528">
    <property type="term" value="P:skeletal muscle fiber differentiation"/>
    <property type="evidence" value="ECO:0000315"/>
    <property type="project" value="MGI"/>
</dbReference>
<dbReference type="InterPro" id="IPR009644">
    <property type="entry name" value="FKTN-rel"/>
</dbReference>
<dbReference type="InterPro" id="IPR045587">
    <property type="entry name" value="FKTN_N"/>
</dbReference>
<dbReference type="InterPro" id="IPR007074">
    <property type="entry name" value="LicD/FKTN/FKRP_NTP_transf"/>
</dbReference>
<dbReference type="PANTHER" id="PTHR15407">
    <property type="entry name" value="FUKUTIN-RELATED"/>
    <property type="match status" value="1"/>
</dbReference>
<dbReference type="PANTHER" id="PTHR15407:SF28">
    <property type="entry name" value="RIBITOL-5-PHOSPHATE TRANSFERASE FKTN"/>
    <property type="match status" value="1"/>
</dbReference>
<dbReference type="Pfam" id="PF19737">
    <property type="entry name" value="FKTN_N"/>
    <property type="match status" value="1"/>
</dbReference>
<dbReference type="Pfam" id="PF04991">
    <property type="entry name" value="LicD"/>
    <property type="match status" value="1"/>
</dbReference>
<name>FKTN_MOUSE</name>
<feature type="chain" id="PRO_0000204722" description="Ribitol-5-phosphate transferase FKTN">
    <location>
        <begin position="1"/>
        <end position="461"/>
    </location>
</feature>
<feature type="topological domain" description="Cytoplasmic" evidence="2">
    <location>
        <begin position="1"/>
        <end position="7"/>
    </location>
</feature>
<feature type="transmembrane region" description="Helical; Signal-anchor for type II membrane protein" evidence="2">
    <location>
        <begin position="8"/>
        <end position="28"/>
    </location>
</feature>
<feature type="topological domain" description="Lumenal" evidence="2">
    <location>
        <begin position="29"/>
        <end position="461"/>
    </location>
</feature>
<feature type="region of interest" description="Required and sufficient for interaction with POMGNT1" evidence="1">
    <location>
        <begin position="6"/>
        <end position="27"/>
    </location>
</feature>
<feature type="glycosylation site" description="N-linked (GlcNAc...) asparagine" evidence="2">
    <location>
        <position position="92"/>
    </location>
</feature>
<feature type="sequence conflict" description="In Ref. 4; AAH17538." evidence="10" ref="4">
    <original>P</original>
    <variation>L</variation>
    <location>
        <position position="38"/>
    </location>
</feature>
<comment type="function">
    <text evidence="1 4 6 7 11">Catalyzes the transfer of CDP-ribitol to the distal N-acetylgalactosamine of the phosphorylated O-mannosyl trisaccharide (N-acetylgalactosamine-beta-3-N-acetylglucosamine-beta-4-(phosphate-6-)mannose), a carbohydrate structure present in alpha-dystroglycan (DAG1) (PubMed:12471058). This constitutes the first step in the formation of the ribitol 5-phosphate tandem repeat which links the phosphorylated O-mannosyl trisaccharide to the ligand binding moiety composed of repeats of 3-xylosyl-alpha-1,3-glucuronic acid-beta-1 (By similarity). Required for normal location of POMGNT1 in Golgi membranes, and for normal POMGNT1 activity (PubMed:19017726). May interact with and reinforce a large complex encompassing the outside and inside of muscle membranes (PubMed:19017726, PubMed:22922256). Could be involved in brain development (Probable).</text>
</comment>
<comment type="catalytic activity">
    <reaction evidence="1">
        <text>3-O-[beta-D-GalNAc-(1-&gt;3)-beta-D-GlcNAc-(1-&gt;4)-(O-6-P-alpha-D-Man)]-Thr-[protein] + CDP-L-ribitol = 3-O-[Rib-ol-P-3-beta-D-GalNAc-(1-&gt;3)-beta-D-GlcNAc-(1-&gt;4)-(O-6-P-alpha-D-Man)]-Thr-[protein] + CMP + H(+)</text>
        <dbReference type="Rhea" id="RHEA:36551"/>
        <dbReference type="Rhea" id="RHEA-COMP:13309"/>
        <dbReference type="Rhea" id="RHEA-COMP:17480"/>
        <dbReference type="ChEBI" id="CHEBI:15378"/>
        <dbReference type="ChEBI" id="CHEBI:57608"/>
        <dbReference type="ChEBI" id="CHEBI:60377"/>
        <dbReference type="ChEBI" id="CHEBI:136710"/>
        <dbReference type="ChEBI" id="CHEBI:177331"/>
    </reaction>
    <physiologicalReaction direction="left-to-right" evidence="1">
        <dbReference type="Rhea" id="RHEA:36552"/>
    </physiologicalReaction>
</comment>
<comment type="pathway">
    <text evidence="6">Protein modification; protein glycosylation.</text>
</comment>
<comment type="subunit">
    <text evidence="1">Forms a complex composed of FKTN/fukutin, FKRP and RXYLT1/TMEM5 (By similarity). Interacts (via transmembrane domain) with POMGNT1; the interaction is direct and is required for normal POMGNT1 location in Golgi membranes (By similarity).</text>
</comment>
<comment type="subcellular location">
    <subcellularLocation>
        <location evidence="4">Golgi apparatus membrane</location>
        <topology evidence="10">Single-pass type II membrane protein</topology>
    </subcellularLocation>
    <subcellularLocation>
        <location evidence="8">Cytoplasm</location>
    </subcellularLocation>
    <subcellularLocation>
        <location evidence="8">Nucleus</location>
    </subcellularLocation>
    <subcellularLocation>
        <location evidence="12">Endoplasmic reticulum</location>
    </subcellularLocation>
    <text evidence="8">In retinal tissue, does not localize with the Golgi apparatus.</text>
</comment>
<comment type="tissue specificity">
    <text evidence="3 4 8">Expressed in the retina, with highest levels found in the inner segments of photoreceptors and the outer plexiform layer (at protein level) (PubMed:29416295). Expressed at lower levels in the inner and outer nuclear layers, the inner plexiform layers, and the ganglion cell layers of the retina (at protein level) (PubMed:29416295). Expressed in the heart, brain, spleen, lung, liver, skeletal muscle, kidney and testis (PubMed:12408965, PubMed:12471058).</text>
</comment>
<comment type="developmental stage">
    <text evidence="5">Wide distribution of expression throughout embryonic development, most predominantly in the central and peripheral nervous systems. High expression in the ventricular zone of proliferating neurons at 13.5 dpc. Broadly expressed in late embryonic and early postnatal cerebellar neurons, including premigratory granule neurons of the external granule cell layer. Expression is maintained in neurons of the internal granule cell layer after migration is complete. Intense expression in Purkinje cells throughout development. A unique pattern of intense expression in irregularly spaced cell bodies that do not appear to correlate with known parasagittal stripes. Expressed in Bergmann glial scaffolds used by granule cells during early posnatal radial migration.</text>
</comment>
<comment type="disruption phenotype">
    <text evidence="6 7">Embryonic lethality (PubMed:19017726). However, when human FCMD disease-causing retrotransposon is introduced into the mouse fukutin gene, alpha-dystroglycan/DAG1 is hypoglycosylated in muscles as is seen in FCMD (congenital muscular dystrophy Fukuyama) patients. Transfer of normal fukutin gene into these knockin mice restores glycosylation of alpha-dystroglycan (PubMed:19017726). Conditional knockout in muscle results in near absence of glycosylated dystroglycan within 18 days of gene deletion. 20 week-old knockout mice show clear dystrophic histopathology and defects in glycosylation near the dystroglycan O-mannose phosphate when excision driven by muscle-specific promoters takes place at 8 dpc or 17 dpc. Earlier gene deletion causes more severe phenotypes (PubMed:22922256).</text>
</comment>
<comment type="similarity">
    <text evidence="10">Belongs to the LicD transferase family.</text>
</comment>
<sequence length="461" mass="53579">MSRINKNVVLALLTLTSSAFLLFQLYYYKHYLSARNGPGSSKSKGNRVGFDSTQWRAVKKFIMLTSSQNVPVFLIDPWILESINKNFEQVKNASQGPASECRFFCVPRDFTAFALQYHLWKNEDGWFRIAENMGFQCLKTESKDPRLDGIDSLSGTEIPLHYVCKLTTHAIHLVVFHERSGNYLWHGHLRLKGHMDRKFVPFRKLQFGRYPGAFDRPELQQVTVDGLDMLIPKDPGRFLEEVPHSRFIECRYKEARAFLQQYIDDNTVDAMVFRKRAKELLQLAAKTLKDLGVPFWLSSGTCLGWYRQCGIIPYSKDVDLGIFIQDYKPDIILAFQEAGLPLKHKFGKVEDSLELSFQGKNDVKLDIFFFYEEADHLWNGGTQARTGKKFKYLFPKFTLCWTEFVDIKVHVPCETVDYIEANYGKTWKIPIKTWDWKSSPPNVQPNGIWPISEWDEVIQLY</sequence>
<evidence type="ECO:0000250" key="1">
    <source>
        <dbReference type="UniProtKB" id="O75072"/>
    </source>
</evidence>
<evidence type="ECO:0000255" key="2"/>
<evidence type="ECO:0000269" key="3">
    <source>
    </source>
</evidence>
<evidence type="ECO:0000269" key="4">
    <source>
    </source>
</evidence>
<evidence type="ECO:0000269" key="5">
    <source>
    </source>
</evidence>
<evidence type="ECO:0000269" key="6">
    <source>
    </source>
</evidence>
<evidence type="ECO:0000269" key="7">
    <source>
    </source>
</evidence>
<evidence type="ECO:0000269" key="8">
    <source>
    </source>
</evidence>
<evidence type="ECO:0000303" key="9">
    <source>
    </source>
</evidence>
<evidence type="ECO:0000305" key="10"/>
<evidence type="ECO:0000305" key="11">
    <source>
    </source>
</evidence>
<evidence type="ECO:0000305" key="12">
    <source>
    </source>
</evidence>
<evidence type="ECO:0000312" key="13">
    <source>
        <dbReference type="MGI" id="MGI:2179507"/>
    </source>
</evidence>
<accession>Q8R507</accession>
<accession>Q8VD64</accession>
<protein>
    <recommendedName>
        <fullName evidence="10">Ribitol-5-phosphate transferase FKTN</fullName>
        <ecNumber evidence="1">2.7.8.-</ecNumber>
    </recommendedName>
    <alternativeName>
        <fullName evidence="9">Fukutin</fullName>
    </alternativeName>
    <alternativeName>
        <fullName evidence="1">Fukuyama-type congenital muscular dystrophy protein</fullName>
    </alternativeName>
    <alternativeName>
        <fullName evidence="1">Ribitol-5-phosphate transferase</fullName>
    </alternativeName>
</protein>
<keyword id="KW-0963">Cytoplasm</keyword>
<keyword id="KW-0256">Endoplasmic reticulum</keyword>
<keyword id="KW-0325">Glycoprotein</keyword>
<keyword id="KW-0333">Golgi apparatus</keyword>
<keyword id="KW-0472">Membrane</keyword>
<keyword id="KW-0539">Nucleus</keyword>
<keyword id="KW-1185">Reference proteome</keyword>
<keyword id="KW-0735">Signal-anchor</keyword>
<keyword id="KW-0808">Transferase</keyword>
<keyword id="KW-0812">Transmembrane</keyword>
<keyword id="KW-1133">Transmembrane helix</keyword>
<reference key="1">
    <citation type="journal article" date="2002" name="Hum. Mol. Genet.">
        <title>Functional requirements for fukutin-related protein in the Golgi apparatus.</title>
        <authorList>
            <person name="Esapa C.T."/>
            <person name="Benson M.A."/>
            <person name="Schroeder J.E."/>
            <person name="Martin-Rendon E."/>
            <person name="Brockington M."/>
            <person name="Brown S.C."/>
            <person name="Muntoni F."/>
            <person name="Kroeger S."/>
            <person name="Blake D.J."/>
        </authorList>
    </citation>
    <scope>NUCLEOTIDE SEQUENCE [MRNA]</scope>
    <scope>SUBCELLULAR LOCATION</scope>
    <scope>POSSIBLE FUNCTION</scope>
    <source>
        <strain>C57BL/6J</strain>
        <tissue>Brain</tissue>
    </source>
</reference>
<reference key="2">
    <citation type="journal article" date="2002" name="Genomics">
        <title>Isolation and characterization of the mouse ortholog of the Fukuyama-type congenital muscular dystrophy gene.</title>
        <authorList>
            <person name="Horie M."/>
            <person name="Kobayashi K."/>
            <person name="Takeda S."/>
            <person name="Nakamura Y."/>
            <person name="Lyons G.E."/>
            <person name="Toda T."/>
        </authorList>
    </citation>
    <scope>NUCLEOTIDE SEQUENCE [MRNA]</scope>
    <source>
        <strain>C57BL/6J</strain>
    </source>
</reference>
<reference key="3">
    <citation type="journal article" date="2005" name="Science">
        <title>The transcriptional landscape of the mammalian genome.</title>
        <authorList>
            <person name="Carninci P."/>
            <person name="Kasukawa T."/>
            <person name="Katayama S."/>
            <person name="Gough J."/>
            <person name="Frith M.C."/>
            <person name="Maeda N."/>
            <person name="Oyama R."/>
            <person name="Ravasi T."/>
            <person name="Lenhard B."/>
            <person name="Wells C."/>
            <person name="Kodzius R."/>
            <person name="Shimokawa K."/>
            <person name="Bajic V.B."/>
            <person name="Brenner S.E."/>
            <person name="Batalov S."/>
            <person name="Forrest A.R."/>
            <person name="Zavolan M."/>
            <person name="Davis M.J."/>
            <person name="Wilming L.G."/>
            <person name="Aidinis V."/>
            <person name="Allen J.E."/>
            <person name="Ambesi-Impiombato A."/>
            <person name="Apweiler R."/>
            <person name="Aturaliya R.N."/>
            <person name="Bailey T.L."/>
            <person name="Bansal M."/>
            <person name="Baxter L."/>
            <person name="Beisel K.W."/>
            <person name="Bersano T."/>
            <person name="Bono H."/>
            <person name="Chalk A.M."/>
            <person name="Chiu K.P."/>
            <person name="Choudhary V."/>
            <person name="Christoffels A."/>
            <person name="Clutterbuck D.R."/>
            <person name="Crowe M.L."/>
            <person name="Dalla E."/>
            <person name="Dalrymple B.P."/>
            <person name="de Bono B."/>
            <person name="Della Gatta G."/>
            <person name="di Bernardo D."/>
            <person name="Down T."/>
            <person name="Engstrom P."/>
            <person name="Fagiolini M."/>
            <person name="Faulkner G."/>
            <person name="Fletcher C.F."/>
            <person name="Fukushima T."/>
            <person name="Furuno M."/>
            <person name="Futaki S."/>
            <person name="Gariboldi M."/>
            <person name="Georgii-Hemming P."/>
            <person name="Gingeras T.R."/>
            <person name="Gojobori T."/>
            <person name="Green R.E."/>
            <person name="Gustincich S."/>
            <person name="Harbers M."/>
            <person name="Hayashi Y."/>
            <person name="Hensch T.K."/>
            <person name="Hirokawa N."/>
            <person name="Hill D."/>
            <person name="Huminiecki L."/>
            <person name="Iacono M."/>
            <person name="Ikeo K."/>
            <person name="Iwama A."/>
            <person name="Ishikawa T."/>
            <person name="Jakt M."/>
            <person name="Kanapin A."/>
            <person name="Katoh M."/>
            <person name="Kawasawa Y."/>
            <person name="Kelso J."/>
            <person name="Kitamura H."/>
            <person name="Kitano H."/>
            <person name="Kollias G."/>
            <person name="Krishnan S.P."/>
            <person name="Kruger A."/>
            <person name="Kummerfeld S.K."/>
            <person name="Kurochkin I.V."/>
            <person name="Lareau L.F."/>
            <person name="Lazarevic D."/>
            <person name="Lipovich L."/>
            <person name="Liu J."/>
            <person name="Liuni S."/>
            <person name="McWilliam S."/>
            <person name="Madan Babu M."/>
            <person name="Madera M."/>
            <person name="Marchionni L."/>
            <person name="Matsuda H."/>
            <person name="Matsuzawa S."/>
            <person name="Miki H."/>
            <person name="Mignone F."/>
            <person name="Miyake S."/>
            <person name="Morris K."/>
            <person name="Mottagui-Tabar S."/>
            <person name="Mulder N."/>
            <person name="Nakano N."/>
            <person name="Nakauchi H."/>
            <person name="Ng P."/>
            <person name="Nilsson R."/>
            <person name="Nishiguchi S."/>
            <person name="Nishikawa S."/>
            <person name="Nori F."/>
            <person name="Ohara O."/>
            <person name="Okazaki Y."/>
            <person name="Orlando V."/>
            <person name="Pang K.C."/>
            <person name="Pavan W.J."/>
            <person name="Pavesi G."/>
            <person name="Pesole G."/>
            <person name="Petrovsky N."/>
            <person name="Piazza S."/>
            <person name="Reed J."/>
            <person name="Reid J.F."/>
            <person name="Ring B.Z."/>
            <person name="Ringwald M."/>
            <person name="Rost B."/>
            <person name="Ruan Y."/>
            <person name="Salzberg S.L."/>
            <person name="Sandelin A."/>
            <person name="Schneider C."/>
            <person name="Schoenbach C."/>
            <person name="Sekiguchi K."/>
            <person name="Semple C.A."/>
            <person name="Seno S."/>
            <person name="Sessa L."/>
            <person name="Sheng Y."/>
            <person name="Shibata Y."/>
            <person name="Shimada H."/>
            <person name="Shimada K."/>
            <person name="Silva D."/>
            <person name="Sinclair B."/>
            <person name="Sperling S."/>
            <person name="Stupka E."/>
            <person name="Sugiura K."/>
            <person name="Sultana R."/>
            <person name="Takenaka Y."/>
            <person name="Taki K."/>
            <person name="Tammoja K."/>
            <person name="Tan S.L."/>
            <person name="Tang S."/>
            <person name="Taylor M.S."/>
            <person name="Tegner J."/>
            <person name="Teichmann S.A."/>
            <person name="Ueda H.R."/>
            <person name="van Nimwegen E."/>
            <person name="Verardo R."/>
            <person name="Wei C.L."/>
            <person name="Yagi K."/>
            <person name="Yamanishi H."/>
            <person name="Zabarovsky E."/>
            <person name="Zhu S."/>
            <person name="Zimmer A."/>
            <person name="Hide W."/>
            <person name="Bult C."/>
            <person name="Grimmond S.M."/>
            <person name="Teasdale R.D."/>
            <person name="Liu E.T."/>
            <person name="Brusic V."/>
            <person name="Quackenbush J."/>
            <person name="Wahlestedt C."/>
            <person name="Mattick J.S."/>
            <person name="Hume D.A."/>
            <person name="Kai C."/>
            <person name="Sasaki D."/>
            <person name="Tomaru Y."/>
            <person name="Fukuda S."/>
            <person name="Kanamori-Katayama M."/>
            <person name="Suzuki M."/>
            <person name="Aoki J."/>
            <person name="Arakawa T."/>
            <person name="Iida J."/>
            <person name="Imamura K."/>
            <person name="Itoh M."/>
            <person name="Kato T."/>
            <person name="Kawaji H."/>
            <person name="Kawagashira N."/>
            <person name="Kawashima T."/>
            <person name="Kojima M."/>
            <person name="Kondo S."/>
            <person name="Konno H."/>
            <person name="Nakano K."/>
            <person name="Ninomiya N."/>
            <person name="Nishio T."/>
            <person name="Okada M."/>
            <person name="Plessy C."/>
            <person name="Shibata K."/>
            <person name="Shiraki T."/>
            <person name="Suzuki S."/>
            <person name="Tagami M."/>
            <person name="Waki K."/>
            <person name="Watahiki A."/>
            <person name="Okamura-Oho Y."/>
            <person name="Suzuki H."/>
            <person name="Kawai J."/>
            <person name="Hayashizaki Y."/>
        </authorList>
    </citation>
    <scope>NUCLEOTIDE SEQUENCE [LARGE SCALE MRNA]</scope>
    <source>
        <strain>C57BL/6J</strain>
        <tissue>Heart</tissue>
    </source>
</reference>
<reference key="4">
    <citation type="journal article" date="2004" name="Genome Res.">
        <title>The status, quality, and expansion of the NIH full-length cDNA project: the Mammalian Gene Collection (MGC).</title>
        <authorList>
            <consortium name="The MGC Project Team"/>
        </authorList>
    </citation>
    <scope>NUCLEOTIDE SEQUENCE [LARGE SCALE MRNA]</scope>
    <source>
        <tissue>Retina</tissue>
    </source>
</reference>
<reference key="5">
    <citation type="journal article" date="2003" name="Brain Res. Mol. Brain Res.">
        <title>Expression of dystroglycan, fukutin and POMGnT1 during mouse cerebellar development.</title>
        <authorList>
            <person name="Henion T.R."/>
            <person name="Qu Q."/>
            <person name="Smith F.I."/>
        </authorList>
    </citation>
    <scope>DEVELOPMENTAL STAGE</scope>
</reference>
<reference key="6">
    <citation type="journal article" date="2009" name="Hum. Mol. Genet.">
        <title>Residual laminin-binding activity and enhanced dystroglycan glycosylation by LARGE in novel model mice to dystroglycanopathy.</title>
        <authorList>
            <person name="Kanagawa M."/>
            <person name="Nishimoto A."/>
            <person name="Chiyonobu T."/>
            <person name="Takeda S."/>
            <person name="Miyagoe-Suzuki Y."/>
            <person name="Wang F."/>
            <person name="Fujikake N."/>
            <person name="Taniguchi M."/>
            <person name="Lu Z."/>
            <person name="Tachikawa M."/>
            <person name="Nagai Y."/>
            <person name="Tashiro F."/>
            <person name="Miyazaki J."/>
            <person name="Tajima Y."/>
            <person name="Takeda S."/>
            <person name="Endo T."/>
            <person name="Kobayashi K."/>
            <person name="Campbell K.P."/>
            <person name="Toda T."/>
        </authorList>
    </citation>
    <scope>DISRUPTION PHENOTYPE</scope>
    <scope>FUNCTION</scope>
    <scope>PATHWAY</scope>
</reference>
<reference key="7">
    <citation type="journal article" date="2012" name="J. Clin. Invest.">
        <title>Mouse fukutin deletion impairs dystroglycan processing and recapitulates muscular dystrophy.</title>
        <authorList>
            <person name="Beedle A.M."/>
            <person name="Turner A.J."/>
            <person name="Saito Y."/>
            <person name="Lueck J.D."/>
            <person name="Foltz S.J."/>
            <person name="Fortunato M.J."/>
            <person name="Nienaber P.M."/>
            <person name="Campbell K.P."/>
        </authorList>
    </citation>
    <scope>DISRUPTION PHENOTYPE</scope>
    <scope>FUNCTION</scope>
</reference>
<reference key="8">
    <citation type="journal article" date="2018" name="Mol. Vis.">
        <title>Expression in retinal neurons of fukutin and FKRP, the protein products of two dystroglycanopathy-causative genes.</title>
        <authorList>
            <person name="Haro C."/>
            <person name="Uribe M.L."/>
            <person name="Quereda C."/>
            <person name="Cruces J."/>
            <person name="Martin-Nieto J."/>
        </authorList>
    </citation>
    <scope>SUBCELLULAR LOCATION</scope>
    <scope>TISSUE SPECIFICITY</scope>
</reference>
<proteinExistence type="evidence at protein level"/>